<gene>
    <name evidence="1" type="primary">infC</name>
    <name type="ordered locus">SUB0711</name>
</gene>
<protein>
    <recommendedName>
        <fullName evidence="1">Translation initiation factor IF-3</fullName>
    </recommendedName>
</protein>
<name>IF3_STRU0</name>
<organism>
    <name type="scientific">Streptococcus uberis (strain ATCC BAA-854 / 0140J)</name>
    <dbReference type="NCBI Taxonomy" id="218495"/>
    <lineage>
        <taxon>Bacteria</taxon>
        <taxon>Bacillati</taxon>
        <taxon>Bacillota</taxon>
        <taxon>Bacilli</taxon>
        <taxon>Lactobacillales</taxon>
        <taxon>Streptococcaceae</taxon>
        <taxon>Streptococcus</taxon>
    </lineage>
</organism>
<sequence length="176" mass="20020">MKIIAKKDLFINDEIRVREVRLVGLEGEQLGIKPLSEAQAIADAANVDLVLIQPQAVPPVAKIMDYGKFKFEFQKKQKEQRKKQSVVTVKEVRLSPVIDKGDFETKLRNGRKFLEKGNKVKVSIRFKGRMITHKEIGAKVLAEFAEATQDIAIIEQRAKMDGRQMFMQLAPISDKK</sequence>
<reference key="1">
    <citation type="journal article" date="2009" name="BMC Genomics">
        <title>Evidence for niche adaptation in the genome of the bovine pathogen Streptococcus uberis.</title>
        <authorList>
            <person name="Ward P.N."/>
            <person name="Holden M.T.G."/>
            <person name="Leigh J.A."/>
            <person name="Lennard N."/>
            <person name="Bignell A."/>
            <person name="Barron A."/>
            <person name="Clark L."/>
            <person name="Quail M.A."/>
            <person name="Woodward J."/>
            <person name="Barrell B.G."/>
            <person name="Egan S.A."/>
            <person name="Field T.R."/>
            <person name="Maskell D."/>
            <person name="Kehoe M."/>
            <person name="Dowson C.G."/>
            <person name="Chanter N."/>
            <person name="Whatmore A.M."/>
            <person name="Bentley S.D."/>
            <person name="Parkhill J."/>
        </authorList>
    </citation>
    <scope>NUCLEOTIDE SEQUENCE [LARGE SCALE GENOMIC DNA]</scope>
    <source>
        <strain>ATCC BAA-854 / 0140J</strain>
    </source>
</reference>
<accession>B9DU40</accession>
<dbReference type="EMBL" id="AM946015">
    <property type="protein sequence ID" value="CAR41622.1"/>
    <property type="molecule type" value="Genomic_DNA"/>
</dbReference>
<dbReference type="RefSeq" id="WP_012658228.1">
    <property type="nucleotide sequence ID" value="NC_012004.1"/>
</dbReference>
<dbReference type="SMR" id="B9DU40"/>
<dbReference type="STRING" id="218495.SUB0711"/>
<dbReference type="GeneID" id="93825995"/>
<dbReference type="KEGG" id="sub:SUB0711"/>
<dbReference type="eggNOG" id="COG0290">
    <property type="taxonomic scope" value="Bacteria"/>
</dbReference>
<dbReference type="HOGENOM" id="CLU_054919_3_2_9"/>
<dbReference type="OrthoDB" id="9806014at2"/>
<dbReference type="Proteomes" id="UP000000449">
    <property type="component" value="Chromosome"/>
</dbReference>
<dbReference type="GO" id="GO:0005829">
    <property type="term" value="C:cytosol"/>
    <property type="evidence" value="ECO:0007669"/>
    <property type="project" value="TreeGrafter"/>
</dbReference>
<dbReference type="GO" id="GO:0016020">
    <property type="term" value="C:membrane"/>
    <property type="evidence" value="ECO:0007669"/>
    <property type="project" value="TreeGrafter"/>
</dbReference>
<dbReference type="GO" id="GO:0043022">
    <property type="term" value="F:ribosome binding"/>
    <property type="evidence" value="ECO:0007669"/>
    <property type="project" value="TreeGrafter"/>
</dbReference>
<dbReference type="GO" id="GO:0003743">
    <property type="term" value="F:translation initiation factor activity"/>
    <property type="evidence" value="ECO:0007669"/>
    <property type="project" value="UniProtKB-UniRule"/>
</dbReference>
<dbReference type="GO" id="GO:0032790">
    <property type="term" value="P:ribosome disassembly"/>
    <property type="evidence" value="ECO:0007669"/>
    <property type="project" value="TreeGrafter"/>
</dbReference>
<dbReference type="FunFam" id="3.10.20.80:FF:000001">
    <property type="entry name" value="Translation initiation factor IF-3"/>
    <property type="match status" value="1"/>
</dbReference>
<dbReference type="FunFam" id="3.30.110.10:FF:000001">
    <property type="entry name" value="Translation initiation factor IF-3"/>
    <property type="match status" value="1"/>
</dbReference>
<dbReference type="Gene3D" id="3.30.110.10">
    <property type="entry name" value="Translation initiation factor 3 (IF-3), C-terminal domain"/>
    <property type="match status" value="1"/>
</dbReference>
<dbReference type="Gene3D" id="3.10.20.80">
    <property type="entry name" value="Translation initiation factor 3 (IF-3), N-terminal domain"/>
    <property type="match status" value="1"/>
</dbReference>
<dbReference type="HAMAP" id="MF_00080">
    <property type="entry name" value="IF_3"/>
    <property type="match status" value="1"/>
</dbReference>
<dbReference type="InterPro" id="IPR036788">
    <property type="entry name" value="T_IF-3_C_sf"/>
</dbReference>
<dbReference type="InterPro" id="IPR036787">
    <property type="entry name" value="T_IF-3_N_sf"/>
</dbReference>
<dbReference type="InterPro" id="IPR019813">
    <property type="entry name" value="Translation_initiation_fac3_CS"/>
</dbReference>
<dbReference type="InterPro" id="IPR001288">
    <property type="entry name" value="Translation_initiation_fac_3"/>
</dbReference>
<dbReference type="InterPro" id="IPR019815">
    <property type="entry name" value="Translation_initiation_fac_3_C"/>
</dbReference>
<dbReference type="InterPro" id="IPR019814">
    <property type="entry name" value="Translation_initiation_fac_3_N"/>
</dbReference>
<dbReference type="NCBIfam" id="TIGR00168">
    <property type="entry name" value="infC"/>
    <property type="match status" value="1"/>
</dbReference>
<dbReference type="PANTHER" id="PTHR10938">
    <property type="entry name" value="TRANSLATION INITIATION FACTOR IF-3"/>
    <property type="match status" value="1"/>
</dbReference>
<dbReference type="PANTHER" id="PTHR10938:SF0">
    <property type="entry name" value="TRANSLATION INITIATION FACTOR IF-3, MITOCHONDRIAL"/>
    <property type="match status" value="1"/>
</dbReference>
<dbReference type="Pfam" id="PF00707">
    <property type="entry name" value="IF3_C"/>
    <property type="match status" value="1"/>
</dbReference>
<dbReference type="Pfam" id="PF05198">
    <property type="entry name" value="IF3_N"/>
    <property type="match status" value="1"/>
</dbReference>
<dbReference type="SUPFAM" id="SSF55200">
    <property type="entry name" value="Translation initiation factor IF3, C-terminal domain"/>
    <property type="match status" value="1"/>
</dbReference>
<dbReference type="SUPFAM" id="SSF54364">
    <property type="entry name" value="Translation initiation factor IF3, N-terminal domain"/>
    <property type="match status" value="1"/>
</dbReference>
<dbReference type="PROSITE" id="PS00938">
    <property type="entry name" value="IF3"/>
    <property type="match status" value="1"/>
</dbReference>
<proteinExistence type="inferred from homology"/>
<evidence type="ECO:0000255" key="1">
    <source>
        <dbReference type="HAMAP-Rule" id="MF_00080"/>
    </source>
</evidence>
<keyword id="KW-0963">Cytoplasm</keyword>
<keyword id="KW-0396">Initiation factor</keyword>
<keyword id="KW-0648">Protein biosynthesis</keyword>
<keyword id="KW-1185">Reference proteome</keyword>
<feature type="chain" id="PRO_1000190848" description="Translation initiation factor IF-3">
    <location>
        <begin position="1"/>
        <end position="176"/>
    </location>
</feature>
<comment type="function">
    <text evidence="1">IF-3 binds to the 30S ribosomal subunit and shifts the equilibrium between 70S ribosomes and their 50S and 30S subunits in favor of the free subunits, thus enhancing the availability of 30S subunits on which protein synthesis initiation begins.</text>
</comment>
<comment type="subunit">
    <text evidence="1">Monomer.</text>
</comment>
<comment type="subcellular location">
    <subcellularLocation>
        <location evidence="1">Cytoplasm</location>
    </subcellularLocation>
</comment>
<comment type="similarity">
    <text evidence="1">Belongs to the IF-3 family.</text>
</comment>